<proteinExistence type="inferred from homology"/>
<organism>
    <name type="scientific">Paracidovorax citrulli (strain AAC00-1)</name>
    <name type="common">Acidovorax citrulli</name>
    <dbReference type="NCBI Taxonomy" id="397945"/>
    <lineage>
        <taxon>Bacteria</taxon>
        <taxon>Pseudomonadati</taxon>
        <taxon>Pseudomonadota</taxon>
        <taxon>Betaproteobacteria</taxon>
        <taxon>Burkholderiales</taxon>
        <taxon>Comamonadaceae</taxon>
        <taxon>Paracidovorax</taxon>
    </lineage>
</organism>
<sequence>MSITPQEALQRTIEHREIFHDEMLHLMRMIMRGELSPVMTAAIVTGLRVKKETIGEITAAAQVMRELSRKVAVADTTHLVDIVGTGGDGANTFNISTCAMFVAAAAGAKTAKHGGRGVSSKSGSADVMESLGVHIDLPPEAIARCIADTGIGFMFAPNHHPAMKNVAPVRKELGVRTLFNILGPLTNPAGAPNILMGVFHPDLVGIQVRALQRLGAEHALVVYGRDGMDEVSLGAATMVGELKNGEITEYEIHPEDFGLAMSSNRALKVETPEQSREMLLSVLRGEPGSAREIVCLNAGVALYAANVAATMADGIARARAALDSGAALARLEQLVARTRALAAGG</sequence>
<feature type="chain" id="PRO_1000042981" description="Anthranilate phosphoribosyltransferase">
    <location>
        <begin position="1"/>
        <end position="345"/>
    </location>
</feature>
<feature type="binding site" evidence="1">
    <location>
        <position position="84"/>
    </location>
    <ligand>
        <name>5-phospho-alpha-D-ribose 1-diphosphate</name>
        <dbReference type="ChEBI" id="CHEBI:58017"/>
    </ligand>
</feature>
<feature type="binding site" evidence="1">
    <location>
        <position position="84"/>
    </location>
    <ligand>
        <name>anthranilate</name>
        <dbReference type="ChEBI" id="CHEBI:16567"/>
        <label>1</label>
    </ligand>
</feature>
<feature type="binding site" evidence="1">
    <location>
        <begin position="87"/>
        <end position="88"/>
    </location>
    <ligand>
        <name>5-phospho-alpha-D-ribose 1-diphosphate</name>
        <dbReference type="ChEBI" id="CHEBI:58017"/>
    </ligand>
</feature>
<feature type="binding site" evidence="1">
    <location>
        <position position="92"/>
    </location>
    <ligand>
        <name>5-phospho-alpha-D-ribose 1-diphosphate</name>
        <dbReference type="ChEBI" id="CHEBI:58017"/>
    </ligand>
</feature>
<feature type="binding site" evidence="1">
    <location>
        <begin position="94"/>
        <end position="97"/>
    </location>
    <ligand>
        <name>5-phospho-alpha-D-ribose 1-diphosphate</name>
        <dbReference type="ChEBI" id="CHEBI:58017"/>
    </ligand>
</feature>
<feature type="binding site" evidence="1">
    <location>
        <position position="96"/>
    </location>
    <ligand>
        <name>Mg(2+)</name>
        <dbReference type="ChEBI" id="CHEBI:18420"/>
        <label>1</label>
    </ligand>
</feature>
<feature type="binding site" evidence="1">
    <location>
        <begin position="112"/>
        <end position="120"/>
    </location>
    <ligand>
        <name>5-phospho-alpha-D-ribose 1-diphosphate</name>
        <dbReference type="ChEBI" id="CHEBI:58017"/>
    </ligand>
</feature>
<feature type="binding site" evidence="1">
    <location>
        <position position="124"/>
    </location>
    <ligand>
        <name>5-phospho-alpha-D-ribose 1-diphosphate</name>
        <dbReference type="ChEBI" id="CHEBI:58017"/>
    </ligand>
</feature>
<feature type="binding site" evidence="1">
    <location>
        <position position="170"/>
    </location>
    <ligand>
        <name>anthranilate</name>
        <dbReference type="ChEBI" id="CHEBI:16567"/>
        <label>2</label>
    </ligand>
</feature>
<feature type="binding site" evidence="1">
    <location>
        <position position="229"/>
    </location>
    <ligand>
        <name>Mg(2+)</name>
        <dbReference type="ChEBI" id="CHEBI:18420"/>
        <label>2</label>
    </ligand>
</feature>
<feature type="binding site" evidence="1">
    <location>
        <position position="230"/>
    </location>
    <ligand>
        <name>Mg(2+)</name>
        <dbReference type="ChEBI" id="CHEBI:18420"/>
        <label>1</label>
    </ligand>
</feature>
<feature type="binding site" evidence="1">
    <location>
        <position position="230"/>
    </location>
    <ligand>
        <name>Mg(2+)</name>
        <dbReference type="ChEBI" id="CHEBI:18420"/>
        <label>2</label>
    </ligand>
</feature>
<gene>
    <name evidence="1" type="primary">trpD</name>
    <name type="ordered locus">Aave_0585</name>
</gene>
<keyword id="KW-0028">Amino-acid biosynthesis</keyword>
<keyword id="KW-0057">Aromatic amino acid biosynthesis</keyword>
<keyword id="KW-0328">Glycosyltransferase</keyword>
<keyword id="KW-0460">Magnesium</keyword>
<keyword id="KW-0479">Metal-binding</keyword>
<keyword id="KW-0808">Transferase</keyword>
<keyword id="KW-0822">Tryptophan biosynthesis</keyword>
<comment type="function">
    <text evidence="1">Catalyzes the transfer of the phosphoribosyl group of 5-phosphorylribose-1-pyrophosphate (PRPP) to anthranilate to yield N-(5'-phosphoribosyl)-anthranilate (PRA).</text>
</comment>
<comment type="catalytic activity">
    <reaction evidence="1">
        <text>N-(5-phospho-beta-D-ribosyl)anthranilate + diphosphate = 5-phospho-alpha-D-ribose 1-diphosphate + anthranilate</text>
        <dbReference type="Rhea" id="RHEA:11768"/>
        <dbReference type="ChEBI" id="CHEBI:16567"/>
        <dbReference type="ChEBI" id="CHEBI:18277"/>
        <dbReference type="ChEBI" id="CHEBI:33019"/>
        <dbReference type="ChEBI" id="CHEBI:58017"/>
        <dbReference type="EC" id="2.4.2.18"/>
    </reaction>
</comment>
<comment type="cofactor">
    <cofactor evidence="1">
        <name>Mg(2+)</name>
        <dbReference type="ChEBI" id="CHEBI:18420"/>
    </cofactor>
    <text evidence="1">Binds 2 magnesium ions per monomer.</text>
</comment>
<comment type="pathway">
    <text evidence="1">Amino-acid biosynthesis; L-tryptophan biosynthesis; L-tryptophan from chorismate: step 2/5.</text>
</comment>
<comment type="subunit">
    <text evidence="1">Homodimer.</text>
</comment>
<comment type="similarity">
    <text evidence="1">Belongs to the anthranilate phosphoribosyltransferase family.</text>
</comment>
<evidence type="ECO:0000255" key="1">
    <source>
        <dbReference type="HAMAP-Rule" id="MF_00211"/>
    </source>
</evidence>
<protein>
    <recommendedName>
        <fullName evidence="1">Anthranilate phosphoribosyltransferase</fullName>
        <ecNumber evidence="1">2.4.2.18</ecNumber>
    </recommendedName>
</protein>
<dbReference type="EC" id="2.4.2.18" evidence="1"/>
<dbReference type="EMBL" id="CP000512">
    <property type="protein sequence ID" value="ABM31189.1"/>
    <property type="molecule type" value="Genomic_DNA"/>
</dbReference>
<dbReference type="RefSeq" id="WP_011793760.1">
    <property type="nucleotide sequence ID" value="NC_008752.1"/>
</dbReference>
<dbReference type="SMR" id="A1TJQ1"/>
<dbReference type="STRING" id="397945.Aave_0585"/>
<dbReference type="KEGG" id="aav:Aave_0585"/>
<dbReference type="eggNOG" id="COG0547">
    <property type="taxonomic scope" value="Bacteria"/>
</dbReference>
<dbReference type="HOGENOM" id="CLU_034315_2_1_4"/>
<dbReference type="OrthoDB" id="9806430at2"/>
<dbReference type="UniPathway" id="UPA00035">
    <property type="reaction ID" value="UER00041"/>
</dbReference>
<dbReference type="Proteomes" id="UP000002596">
    <property type="component" value="Chromosome"/>
</dbReference>
<dbReference type="GO" id="GO:0005829">
    <property type="term" value="C:cytosol"/>
    <property type="evidence" value="ECO:0007669"/>
    <property type="project" value="TreeGrafter"/>
</dbReference>
<dbReference type="GO" id="GO:0004048">
    <property type="term" value="F:anthranilate phosphoribosyltransferase activity"/>
    <property type="evidence" value="ECO:0007669"/>
    <property type="project" value="UniProtKB-UniRule"/>
</dbReference>
<dbReference type="GO" id="GO:0000287">
    <property type="term" value="F:magnesium ion binding"/>
    <property type="evidence" value="ECO:0007669"/>
    <property type="project" value="UniProtKB-UniRule"/>
</dbReference>
<dbReference type="GO" id="GO:0000162">
    <property type="term" value="P:L-tryptophan biosynthetic process"/>
    <property type="evidence" value="ECO:0007669"/>
    <property type="project" value="UniProtKB-UniRule"/>
</dbReference>
<dbReference type="FunFam" id="1.20.970.10:FF:000006">
    <property type="entry name" value="Anthranilate phosphoribosyltransferase"/>
    <property type="match status" value="1"/>
</dbReference>
<dbReference type="FunFam" id="3.40.1030.10:FF:000002">
    <property type="entry name" value="Anthranilate phosphoribosyltransferase"/>
    <property type="match status" value="1"/>
</dbReference>
<dbReference type="Gene3D" id="3.40.1030.10">
    <property type="entry name" value="Nucleoside phosphorylase/phosphoribosyltransferase catalytic domain"/>
    <property type="match status" value="1"/>
</dbReference>
<dbReference type="Gene3D" id="1.20.970.10">
    <property type="entry name" value="Transferase, Pyrimidine Nucleoside Phosphorylase, Chain C"/>
    <property type="match status" value="1"/>
</dbReference>
<dbReference type="HAMAP" id="MF_00211">
    <property type="entry name" value="TrpD"/>
    <property type="match status" value="1"/>
</dbReference>
<dbReference type="InterPro" id="IPR005940">
    <property type="entry name" value="Anthranilate_Pribosyl_Tfrase"/>
</dbReference>
<dbReference type="InterPro" id="IPR000312">
    <property type="entry name" value="Glycosyl_Trfase_fam3"/>
</dbReference>
<dbReference type="InterPro" id="IPR017459">
    <property type="entry name" value="Glycosyl_Trfase_fam3_N_dom"/>
</dbReference>
<dbReference type="InterPro" id="IPR036320">
    <property type="entry name" value="Glycosyl_Trfase_fam3_N_dom_sf"/>
</dbReference>
<dbReference type="InterPro" id="IPR035902">
    <property type="entry name" value="Nuc_phospho_transferase"/>
</dbReference>
<dbReference type="NCBIfam" id="TIGR01245">
    <property type="entry name" value="trpD"/>
    <property type="match status" value="1"/>
</dbReference>
<dbReference type="PANTHER" id="PTHR43285">
    <property type="entry name" value="ANTHRANILATE PHOSPHORIBOSYLTRANSFERASE"/>
    <property type="match status" value="1"/>
</dbReference>
<dbReference type="PANTHER" id="PTHR43285:SF2">
    <property type="entry name" value="ANTHRANILATE PHOSPHORIBOSYLTRANSFERASE"/>
    <property type="match status" value="1"/>
</dbReference>
<dbReference type="Pfam" id="PF02885">
    <property type="entry name" value="Glycos_trans_3N"/>
    <property type="match status" value="1"/>
</dbReference>
<dbReference type="Pfam" id="PF00591">
    <property type="entry name" value="Glycos_transf_3"/>
    <property type="match status" value="1"/>
</dbReference>
<dbReference type="SUPFAM" id="SSF52418">
    <property type="entry name" value="Nucleoside phosphorylase/phosphoribosyltransferase catalytic domain"/>
    <property type="match status" value="1"/>
</dbReference>
<dbReference type="SUPFAM" id="SSF47648">
    <property type="entry name" value="Nucleoside phosphorylase/phosphoribosyltransferase N-terminal domain"/>
    <property type="match status" value="1"/>
</dbReference>
<reference key="1">
    <citation type="submission" date="2006-12" db="EMBL/GenBank/DDBJ databases">
        <title>Complete sequence of Acidovorax avenae subsp. citrulli AAC00-1.</title>
        <authorList>
            <person name="Copeland A."/>
            <person name="Lucas S."/>
            <person name="Lapidus A."/>
            <person name="Barry K."/>
            <person name="Detter J.C."/>
            <person name="Glavina del Rio T."/>
            <person name="Dalin E."/>
            <person name="Tice H."/>
            <person name="Pitluck S."/>
            <person name="Kiss H."/>
            <person name="Brettin T."/>
            <person name="Bruce D."/>
            <person name="Han C."/>
            <person name="Tapia R."/>
            <person name="Gilna P."/>
            <person name="Schmutz J."/>
            <person name="Larimer F."/>
            <person name="Land M."/>
            <person name="Hauser L."/>
            <person name="Kyrpides N."/>
            <person name="Kim E."/>
            <person name="Stahl D."/>
            <person name="Richardson P."/>
        </authorList>
    </citation>
    <scope>NUCLEOTIDE SEQUENCE [LARGE SCALE GENOMIC DNA]</scope>
    <source>
        <strain>AAC00-1</strain>
    </source>
</reference>
<accession>A1TJQ1</accession>
<name>TRPD_PARC0</name>